<name>FMT_CUTAK</name>
<comment type="function">
    <text evidence="1">Attaches a formyl group to the free amino group of methionyl-tRNA(fMet). The formyl group appears to play a dual role in the initiator identity of N-formylmethionyl-tRNA by promoting its recognition by IF2 and preventing the misappropriation of this tRNA by the elongation apparatus.</text>
</comment>
<comment type="catalytic activity">
    <reaction evidence="1">
        <text>L-methionyl-tRNA(fMet) + (6R)-10-formyltetrahydrofolate = N-formyl-L-methionyl-tRNA(fMet) + (6S)-5,6,7,8-tetrahydrofolate + H(+)</text>
        <dbReference type="Rhea" id="RHEA:24380"/>
        <dbReference type="Rhea" id="RHEA-COMP:9952"/>
        <dbReference type="Rhea" id="RHEA-COMP:9953"/>
        <dbReference type="ChEBI" id="CHEBI:15378"/>
        <dbReference type="ChEBI" id="CHEBI:57453"/>
        <dbReference type="ChEBI" id="CHEBI:78530"/>
        <dbReference type="ChEBI" id="CHEBI:78844"/>
        <dbReference type="ChEBI" id="CHEBI:195366"/>
        <dbReference type="EC" id="2.1.2.9"/>
    </reaction>
</comment>
<comment type="similarity">
    <text evidence="1">Belongs to the Fmt family.</text>
</comment>
<accession>Q6A8H1</accession>
<feature type="chain" id="PRO_0000083013" description="Methionyl-tRNA formyltransferase">
    <location>
        <begin position="1"/>
        <end position="315"/>
    </location>
</feature>
<feature type="binding site" evidence="1">
    <location>
        <begin position="110"/>
        <end position="113"/>
    </location>
    <ligand>
        <name>(6S)-5,6,7,8-tetrahydrofolate</name>
        <dbReference type="ChEBI" id="CHEBI:57453"/>
    </ligand>
</feature>
<proteinExistence type="inferred from homology"/>
<dbReference type="EC" id="2.1.2.9" evidence="1"/>
<dbReference type="EMBL" id="AE017283">
    <property type="protein sequence ID" value="AAT82944.1"/>
    <property type="molecule type" value="Genomic_DNA"/>
</dbReference>
<dbReference type="RefSeq" id="WP_002517988.1">
    <property type="nucleotide sequence ID" value="NZ_CP025935.1"/>
</dbReference>
<dbReference type="SMR" id="Q6A8H1"/>
<dbReference type="EnsemblBacteria" id="AAT82944">
    <property type="protein sequence ID" value="AAT82944"/>
    <property type="gene ID" value="PPA1195"/>
</dbReference>
<dbReference type="KEGG" id="pac:PPA1195"/>
<dbReference type="eggNOG" id="COG0223">
    <property type="taxonomic scope" value="Bacteria"/>
</dbReference>
<dbReference type="HOGENOM" id="CLU_033347_1_0_11"/>
<dbReference type="Proteomes" id="UP000000603">
    <property type="component" value="Chromosome"/>
</dbReference>
<dbReference type="GO" id="GO:0005829">
    <property type="term" value="C:cytosol"/>
    <property type="evidence" value="ECO:0007669"/>
    <property type="project" value="TreeGrafter"/>
</dbReference>
<dbReference type="GO" id="GO:0004479">
    <property type="term" value="F:methionyl-tRNA formyltransferase activity"/>
    <property type="evidence" value="ECO:0007669"/>
    <property type="project" value="UniProtKB-UniRule"/>
</dbReference>
<dbReference type="CDD" id="cd08646">
    <property type="entry name" value="FMT_core_Met-tRNA-FMT_N"/>
    <property type="match status" value="1"/>
</dbReference>
<dbReference type="CDD" id="cd08704">
    <property type="entry name" value="Met_tRNA_FMT_C"/>
    <property type="match status" value="1"/>
</dbReference>
<dbReference type="Gene3D" id="3.40.50.12230">
    <property type="match status" value="1"/>
</dbReference>
<dbReference type="HAMAP" id="MF_00182">
    <property type="entry name" value="Formyl_trans"/>
    <property type="match status" value="1"/>
</dbReference>
<dbReference type="InterPro" id="IPR005794">
    <property type="entry name" value="Fmt"/>
</dbReference>
<dbReference type="InterPro" id="IPR005793">
    <property type="entry name" value="Formyl_trans_C"/>
</dbReference>
<dbReference type="InterPro" id="IPR002376">
    <property type="entry name" value="Formyl_transf_N"/>
</dbReference>
<dbReference type="InterPro" id="IPR036477">
    <property type="entry name" value="Formyl_transf_N_sf"/>
</dbReference>
<dbReference type="InterPro" id="IPR011034">
    <property type="entry name" value="Formyl_transferase-like_C_sf"/>
</dbReference>
<dbReference type="InterPro" id="IPR044135">
    <property type="entry name" value="Met-tRNA-FMT_C"/>
</dbReference>
<dbReference type="InterPro" id="IPR041711">
    <property type="entry name" value="Met-tRNA-FMT_N"/>
</dbReference>
<dbReference type="NCBIfam" id="TIGR00460">
    <property type="entry name" value="fmt"/>
    <property type="match status" value="1"/>
</dbReference>
<dbReference type="PANTHER" id="PTHR11138">
    <property type="entry name" value="METHIONYL-TRNA FORMYLTRANSFERASE"/>
    <property type="match status" value="1"/>
</dbReference>
<dbReference type="PANTHER" id="PTHR11138:SF5">
    <property type="entry name" value="METHIONYL-TRNA FORMYLTRANSFERASE, MITOCHONDRIAL"/>
    <property type="match status" value="1"/>
</dbReference>
<dbReference type="Pfam" id="PF02911">
    <property type="entry name" value="Formyl_trans_C"/>
    <property type="match status" value="1"/>
</dbReference>
<dbReference type="Pfam" id="PF00551">
    <property type="entry name" value="Formyl_trans_N"/>
    <property type="match status" value="1"/>
</dbReference>
<dbReference type="SUPFAM" id="SSF50486">
    <property type="entry name" value="FMT C-terminal domain-like"/>
    <property type="match status" value="1"/>
</dbReference>
<dbReference type="SUPFAM" id="SSF53328">
    <property type="entry name" value="Formyltransferase"/>
    <property type="match status" value="1"/>
</dbReference>
<reference key="1">
    <citation type="journal article" date="2004" name="Science">
        <title>The complete genome sequence of Propionibacterium acnes, a commensal of human skin.</title>
        <authorList>
            <person name="Brueggemann H."/>
            <person name="Henne A."/>
            <person name="Hoster F."/>
            <person name="Liesegang H."/>
            <person name="Wiezer A."/>
            <person name="Strittmatter A."/>
            <person name="Hujer S."/>
            <person name="Duerre P."/>
            <person name="Gottschalk G."/>
        </authorList>
    </citation>
    <scope>NUCLEOTIDE SEQUENCE [LARGE SCALE GENOMIC DNA]</scope>
    <source>
        <strain>DSM 16379 / KPA171202</strain>
    </source>
</reference>
<sequence length="315" mass="33096">MRLLFAGTPDVAVPTLTALVADPRHEVAAVLTRPDAAVGRHRTPRPCPVAKAAEELGIPAIKATSVKSGEGHDAITSLDADVAVVVAYGGLIPADLLAVPRHGWINLHFSLLPRWRGAAPIQRAIMAGDEETGACVFQLVESLDAGPVYRTMTVPIGPMTTAGELLDELAHTATPLVIEALEDIEAGVEPTPQSVEGVTIAPQIHPDDVRVTVTAAAQEIDNLVRGVSPTPGAWAELDGKRFKILRTRCLEAGDGVPSTVATAQPGQLVATRKQLFLGTGSQPLELLQVQAFGKRAMSGADWARGADIDAGTRLR</sequence>
<gene>
    <name evidence="1" type="primary">fmt</name>
    <name type="ordered locus">PPA1195</name>
</gene>
<protein>
    <recommendedName>
        <fullName evidence="1">Methionyl-tRNA formyltransferase</fullName>
        <ecNumber evidence="1">2.1.2.9</ecNumber>
    </recommendedName>
</protein>
<organism>
    <name type="scientific">Cutibacterium acnes (strain DSM 16379 / KPA171202)</name>
    <name type="common">Propionibacterium acnes</name>
    <dbReference type="NCBI Taxonomy" id="267747"/>
    <lineage>
        <taxon>Bacteria</taxon>
        <taxon>Bacillati</taxon>
        <taxon>Actinomycetota</taxon>
        <taxon>Actinomycetes</taxon>
        <taxon>Propionibacteriales</taxon>
        <taxon>Propionibacteriaceae</taxon>
        <taxon>Cutibacterium</taxon>
    </lineage>
</organism>
<keyword id="KW-0648">Protein biosynthesis</keyword>
<keyword id="KW-0808">Transferase</keyword>
<evidence type="ECO:0000255" key="1">
    <source>
        <dbReference type="HAMAP-Rule" id="MF_00182"/>
    </source>
</evidence>